<feature type="chain" id="PRO_1000125385" description="Ion-translocating oxidoreductase complex subunit D">
    <location>
        <begin position="1"/>
        <end position="353"/>
    </location>
</feature>
<feature type="transmembrane region" description="Helical" evidence="1">
    <location>
        <begin position="20"/>
        <end position="40"/>
    </location>
</feature>
<feature type="transmembrane region" description="Helical" evidence="1">
    <location>
        <begin position="44"/>
        <end position="64"/>
    </location>
</feature>
<feature type="transmembrane region" description="Helical" evidence="1">
    <location>
        <begin position="77"/>
        <end position="108"/>
    </location>
</feature>
<feature type="transmembrane region" description="Helical" evidence="1">
    <location>
        <begin position="123"/>
        <end position="143"/>
    </location>
</feature>
<feature type="transmembrane region" description="Helical" evidence="1">
    <location>
        <begin position="214"/>
        <end position="234"/>
    </location>
</feature>
<feature type="transmembrane region" description="Helical" evidence="1">
    <location>
        <begin position="242"/>
        <end position="262"/>
    </location>
</feature>
<feature type="transmembrane region" description="Helical" evidence="1">
    <location>
        <begin position="267"/>
        <end position="287"/>
    </location>
</feature>
<feature type="transmembrane region" description="Helical" evidence="1">
    <location>
        <begin position="301"/>
        <end position="318"/>
    </location>
</feature>
<feature type="modified residue" description="FMN phosphoryl threonine" evidence="1">
    <location>
        <position position="187"/>
    </location>
</feature>
<gene>
    <name evidence="1" type="primary">rnfD</name>
    <name type="ordered locus">ETA_17770</name>
</gene>
<dbReference type="EC" id="7.-.-.-" evidence="1"/>
<dbReference type="EMBL" id="CU468135">
    <property type="protein sequence ID" value="CAO96823.1"/>
    <property type="molecule type" value="Genomic_DNA"/>
</dbReference>
<dbReference type="RefSeq" id="WP_012441512.1">
    <property type="nucleotide sequence ID" value="NC_010694.1"/>
</dbReference>
<dbReference type="SMR" id="B2VEQ4"/>
<dbReference type="STRING" id="465817.ETA_17770"/>
<dbReference type="KEGG" id="eta:ETA_17770"/>
<dbReference type="eggNOG" id="COG4658">
    <property type="taxonomic scope" value="Bacteria"/>
</dbReference>
<dbReference type="HOGENOM" id="CLU_042020_0_0_6"/>
<dbReference type="OrthoDB" id="9776359at2"/>
<dbReference type="Proteomes" id="UP000001726">
    <property type="component" value="Chromosome"/>
</dbReference>
<dbReference type="GO" id="GO:0005886">
    <property type="term" value="C:plasma membrane"/>
    <property type="evidence" value="ECO:0007669"/>
    <property type="project" value="UniProtKB-SubCell"/>
</dbReference>
<dbReference type="GO" id="GO:0022900">
    <property type="term" value="P:electron transport chain"/>
    <property type="evidence" value="ECO:0007669"/>
    <property type="project" value="UniProtKB-UniRule"/>
</dbReference>
<dbReference type="GO" id="GO:0055085">
    <property type="term" value="P:transmembrane transport"/>
    <property type="evidence" value="ECO:0007669"/>
    <property type="project" value="InterPro"/>
</dbReference>
<dbReference type="HAMAP" id="MF_00462">
    <property type="entry name" value="RsxD_RnfD"/>
    <property type="match status" value="1"/>
</dbReference>
<dbReference type="InterPro" id="IPR004338">
    <property type="entry name" value="NqrB/RnfD"/>
</dbReference>
<dbReference type="InterPro" id="IPR011303">
    <property type="entry name" value="RnfD_bac"/>
</dbReference>
<dbReference type="NCBIfam" id="NF002011">
    <property type="entry name" value="PRK00816.1"/>
    <property type="match status" value="1"/>
</dbReference>
<dbReference type="NCBIfam" id="TIGR01946">
    <property type="entry name" value="rnfD"/>
    <property type="match status" value="1"/>
</dbReference>
<dbReference type="PANTHER" id="PTHR30578">
    <property type="entry name" value="ELECTRON TRANSPORT COMPLEX PROTEIN RNFD"/>
    <property type="match status" value="1"/>
</dbReference>
<dbReference type="PANTHER" id="PTHR30578:SF0">
    <property type="entry name" value="ION-TRANSLOCATING OXIDOREDUCTASE COMPLEX SUBUNIT D"/>
    <property type="match status" value="1"/>
</dbReference>
<dbReference type="Pfam" id="PF03116">
    <property type="entry name" value="NQR2_RnfD_RnfE"/>
    <property type="match status" value="1"/>
</dbReference>
<sequence>MAFRIASSPYTHNRRSTSRIMLLVLIATLPGIAAQWYYFGWGNIIQVLIASVAALVAEAAILHLRKQPLAETLKDNSALLTALLLGVSIPSLAPWWMVTIGTVFAIIISKQLYGGLGQNPFNPAMVGYVVLVISFPVQMTSWLPPVGLQGITPSFADTLSMIFHLHTLDGHTMQQLQVGIDGISQATPLDHFKTGLRAGHSAEQLLAQPTYSGVIAGIGWQWVNVGFLLGGVFLLFTRCIRWHIPVSFIASLAFFATLGWLLSPQSLVTPMIHLFSGATMLGAFFIATDPVTASTTNKGRLLYGVLIGLLTWLIRSYGGYPDGLAFAVLLANICVPLIDYYTQPRVYGHRKGK</sequence>
<proteinExistence type="inferred from homology"/>
<reference key="1">
    <citation type="journal article" date="2008" name="Environ. Microbiol.">
        <title>The genome of Erwinia tasmaniensis strain Et1/99, a non-pathogenic bacterium in the genus Erwinia.</title>
        <authorList>
            <person name="Kube M."/>
            <person name="Migdoll A.M."/>
            <person name="Mueller I."/>
            <person name="Kuhl H."/>
            <person name="Beck A."/>
            <person name="Reinhardt R."/>
            <person name="Geider K."/>
        </authorList>
    </citation>
    <scope>NUCLEOTIDE SEQUENCE [LARGE SCALE GENOMIC DNA]</scope>
    <source>
        <strain>DSM 17950 / CFBP 7177 / CIP 109463 / NCPPB 4357 / Et1/99</strain>
    </source>
</reference>
<protein>
    <recommendedName>
        <fullName evidence="1">Ion-translocating oxidoreductase complex subunit D</fullName>
        <ecNumber evidence="1">7.-.-.-</ecNumber>
    </recommendedName>
    <alternativeName>
        <fullName evidence="1">Rnf electron transport complex subunit D</fullName>
    </alternativeName>
</protein>
<comment type="function">
    <text evidence="1">Part of a membrane-bound complex that couples electron transfer with translocation of ions across the membrane.</text>
</comment>
<comment type="cofactor">
    <cofactor evidence="1">
        <name>FMN</name>
        <dbReference type="ChEBI" id="CHEBI:58210"/>
    </cofactor>
</comment>
<comment type="subunit">
    <text evidence="1">The complex is composed of six subunits: RnfA, RnfB, RnfC, RnfD, RnfE and RnfG.</text>
</comment>
<comment type="subcellular location">
    <subcellularLocation>
        <location evidence="1">Cell inner membrane</location>
        <topology evidence="1">Multi-pass membrane protein</topology>
    </subcellularLocation>
</comment>
<comment type="similarity">
    <text evidence="1">Belongs to the NqrB/RnfD family.</text>
</comment>
<name>RNFD_ERWT9</name>
<accession>B2VEQ4</accession>
<organism>
    <name type="scientific">Erwinia tasmaniensis (strain DSM 17950 / CFBP 7177 / CIP 109463 / NCPPB 4357 / Et1/99)</name>
    <dbReference type="NCBI Taxonomy" id="465817"/>
    <lineage>
        <taxon>Bacteria</taxon>
        <taxon>Pseudomonadati</taxon>
        <taxon>Pseudomonadota</taxon>
        <taxon>Gammaproteobacteria</taxon>
        <taxon>Enterobacterales</taxon>
        <taxon>Erwiniaceae</taxon>
        <taxon>Erwinia</taxon>
    </lineage>
</organism>
<keyword id="KW-0997">Cell inner membrane</keyword>
<keyword id="KW-1003">Cell membrane</keyword>
<keyword id="KW-0249">Electron transport</keyword>
<keyword id="KW-0285">Flavoprotein</keyword>
<keyword id="KW-0288">FMN</keyword>
<keyword id="KW-0472">Membrane</keyword>
<keyword id="KW-0597">Phosphoprotein</keyword>
<keyword id="KW-1185">Reference proteome</keyword>
<keyword id="KW-1278">Translocase</keyword>
<keyword id="KW-0812">Transmembrane</keyword>
<keyword id="KW-1133">Transmembrane helix</keyword>
<keyword id="KW-0813">Transport</keyword>
<evidence type="ECO:0000255" key="1">
    <source>
        <dbReference type="HAMAP-Rule" id="MF_00462"/>
    </source>
</evidence>